<evidence type="ECO:0000255" key="1">
    <source>
        <dbReference type="PROSITE-ProRule" id="PRU01182"/>
    </source>
</evidence>
<evidence type="ECO:0000305" key="2"/>
<sequence>MGKSQYVTGIKKMPINERPREKLLNYGPESLSNPELLAIILSTGTKEMSAIDLATHVLSYSEEGLRHLKNCEIEELQQIKGVGIAKASQILAAVELGKRISLTSRVNHYRIKSPDDVSNLLMEEMRYLKKEYFNIALLNTKHEVIAIENISIGSLNASIVHPREVFVVAIKRSSSAIILVHNHPSGDPSPSGEDIRITKRLVEAGKLLGIEVLDHIIIGDNVYYSLKEKSMM</sequence>
<accession>A6TQH8</accession>
<gene>
    <name type="ordered locus">Amet_2289</name>
</gene>
<dbReference type="EMBL" id="CP000724">
    <property type="protein sequence ID" value="ABR48446.1"/>
    <property type="molecule type" value="Genomic_DNA"/>
</dbReference>
<dbReference type="RefSeq" id="WP_012063421.1">
    <property type="nucleotide sequence ID" value="NC_009633.1"/>
</dbReference>
<dbReference type="SMR" id="A6TQH8"/>
<dbReference type="STRING" id="293826.Amet_2289"/>
<dbReference type="KEGG" id="amt:Amet_2289"/>
<dbReference type="eggNOG" id="COG2003">
    <property type="taxonomic scope" value="Bacteria"/>
</dbReference>
<dbReference type="HOGENOM" id="CLU_073529_0_2_9"/>
<dbReference type="OrthoDB" id="9804482at2"/>
<dbReference type="Proteomes" id="UP000001572">
    <property type="component" value="Chromosome"/>
</dbReference>
<dbReference type="GO" id="GO:0046872">
    <property type="term" value="F:metal ion binding"/>
    <property type="evidence" value="ECO:0007669"/>
    <property type="project" value="UniProtKB-KW"/>
</dbReference>
<dbReference type="GO" id="GO:0008237">
    <property type="term" value="F:metallopeptidase activity"/>
    <property type="evidence" value="ECO:0007669"/>
    <property type="project" value="UniProtKB-KW"/>
</dbReference>
<dbReference type="GO" id="GO:0006508">
    <property type="term" value="P:proteolysis"/>
    <property type="evidence" value="ECO:0007669"/>
    <property type="project" value="UniProtKB-KW"/>
</dbReference>
<dbReference type="CDD" id="cd08071">
    <property type="entry name" value="MPN_DUF2466"/>
    <property type="match status" value="1"/>
</dbReference>
<dbReference type="Gene3D" id="3.40.140.10">
    <property type="entry name" value="Cytidine Deaminase, domain 2"/>
    <property type="match status" value="1"/>
</dbReference>
<dbReference type="InterPro" id="IPR037518">
    <property type="entry name" value="MPN"/>
</dbReference>
<dbReference type="InterPro" id="IPR025657">
    <property type="entry name" value="RadC_JAB"/>
</dbReference>
<dbReference type="InterPro" id="IPR001405">
    <property type="entry name" value="UPF0758"/>
</dbReference>
<dbReference type="InterPro" id="IPR020891">
    <property type="entry name" value="UPF0758_CS"/>
</dbReference>
<dbReference type="InterPro" id="IPR046778">
    <property type="entry name" value="UPF0758_N"/>
</dbReference>
<dbReference type="NCBIfam" id="NF000642">
    <property type="entry name" value="PRK00024.1"/>
    <property type="match status" value="1"/>
</dbReference>
<dbReference type="NCBIfam" id="TIGR00608">
    <property type="entry name" value="radc"/>
    <property type="match status" value="1"/>
</dbReference>
<dbReference type="PANTHER" id="PTHR30471">
    <property type="entry name" value="DNA REPAIR PROTEIN RADC"/>
    <property type="match status" value="1"/>
</dbReference>
<dbReference type="PANTHER" id="PTHR30471:SF3">
    <property type="entry name" value="UPF0758 PROTEIN YEES-RELATED"/>
    <property type="match status" value="1"/>
</dbReference>
<dbReference type="Pfam" id="PF04002">
    <property type="entry name" value="RadC"/>
    <property type="match status" value="1"/>
</dbReference>
<dbReference type="Pfam" id="PF20582">
    <property type="entry name" value="UPF0758_N"/>
    <property type="match status" value="1"/>
</dbReference>
<dbReference type="SUPFAM" id="SSF102712">
    <property type="entry name" value="JAB1/MPN domain"/>
    <property type="match status" value="1"/>
</dbReference>
<dbReference type="PROSITE" id="PS50249">
    <property type="entry name" value="MPN"/>
    <property type="match status" value="1"/>
</dbReference>
<dbReference type="PROSITE" id="PS01302">
    <property type="entry name" value="UPF0758"/>
    <property type="match status" value="1"/>
</dbReference>
<feature type="chain" id="PRO_0000322663" description="UPF0758 protein Amet_2289">
    <location>
        <begin position="1"/>
        <end position="232"/>
    </location>
</feature>
<feature type="domain" description="MPN" evidence="1">
    <location>
        <begin position="110"/>
        <end position="232"/>
    </location>
</feature>
<feature type="short sequence motif" description="JAMM motif" evidence="1">
    <location>
        <begin position="181"/>
        <end position="194"/>
    </location>
</feature>
<feature type="binding site" evidence="1">
    <location>
        <position position="181"/>
    </location>
    <ligand>
        <name>Zn(2+)</name>
        <dbReference type="ChEBI" id="CHEBI:29105"/>
        <note>catalytic</note>
    </ligand>
</feature>
<feature type="binding site" evidence="1">
    <location>
        <position position="183"/>
    </location>
    <ligand>
        <name>Zn(2+)</name>
        <dbReference type="ChEBI" id="CHEBI:29105"/>
        <note>catalytic</note>
    </ligand>
</feature>
<feature type="binding site" evidence="1">
    <location>
        <position position="194"/>
    </location>
    <ligand>
        <name>Zn(2+)</name>
        <dbReference type="ChEBI" id="CHEBI:29105"/>
        <note>catalytic</note>
    </ligand>
</feature>
<reference key="1">
    <citation type="journal article" date="2016" name="Genome Announc.">
        <title>Complete genome sequence of Alkaliphilus metalliredigens strain QYMF, an alkaliphilic and metal-reducing bacterium isolated from borax-contaminated leachate ponds.</title>
        <authorList>
            <person name="Hwang C."/>
            <person name="Copeland A."/>
            <person name="Lucas S."/>
            <person name="Lapidus A."/>
            <person name="Barry K."/>
            <person name="Detter J.C."/>
            <person name="Glavina Del Rio T."/>
            <person name="Hammon N."/>
            <person name="Israni S."/>
            <person name="Dalin E."/>
            <person name="Tice H."/>
            <person name="Pitluck S."/>
            <person name="Chertkov O."/>
            <person name="Brettin T."/>
            <person name="Bruce D."/>
            <person name="Han C."/>
            <person name="Schmutz J."/>
            <person name="Larimer F."/>
            <person name="Land M.L."/>
            <person name="Hauser L."/>
            <person name="Kyrpides N."/>
            <person name="Mikhailova N."/>
            <person name="Ye Q."/>
            <person name="Zhou J."/>
            <person name="Richardson P."/>
            <person name="Fields M.W."/>
        </authorList>
    </citation>
    <scope>NUCLEOTIDE SEQUENCE [LARGE SCALE GENOMIC DNA]</scope>
    <source>
        <strain>QYMF</strain>
    </source>
</reference>
<keyword id="KW-0378">Hydrolase</keyword>
<keyword id="KW-0479">Metal-binding</keyword>
<keyword id="KW-0482">Metalloprotease</keyword>
<keyword id="KW-0645">Protease</keyword>
<keyword id="KW-1185">Reference proteome</keyword>
<keyword id="KW-0862">Zinc</keyword>
<protein>
    <recommendedName>
        <fullName>UPF0758 protein Amet_2289</fullName>
    </recommendedName>
</protein>
<name>Y2289_ALKMQ</name>
<comment type="similarity">
    <text evidence="2">Belongs to the UPF0758 family.</text>
</comment>
<proteinExistence type="inferred from homology"/>
<organism>
    <name type="scientific">Alkaliphilus metalliredigens (strain QYMF)</name>
    <dbReference type="NCBI Taxonomy" id="293826"/>
    <lineage>
        <taxon>Bacteria</taxon>
        <taxon>Bacillati</taxon>
        <taxon>Bacillota</taxon>
        <taxon>Clostridia</taxon>
        <taxon>Peptostreptococcales</taxon>
        <taxon>Natronincolaceae</taxon>
        <taxon>Alkaliphilus</taxon>
    </lineage>
</organism>